<name>ADD_MYCGI</name>
<gene>
    <name evidence="1" type="primary">add</name>
    <name type="ordered locus">Mflv_4841</name>
</gene>
<dbReference type="EC" id="3.5.4.4" evidence="1"/>
<dbReference type="EMBL" id="CP000656">
    <property type="protein sequence ID" value="ABP47309.1"/>
    <property type="molecule type" value="Genomic_DNA"/>
</dbReference>
<dbReference type="SMR" id="A4TEW1"/>
<dbReference type="STRING" id="350054.Mflv_4841"/>
<dbReference type="KEGG" id="mgi:Mflv_4841"/>
<dbReference type="eggNOG" id="COG1816">
    <property type="taxonomic scope" value="Bacteria"/>
</dbReference>
<dbReference type="HOGENOM" id="CLU_039228_0_0_11"/>
<dbReference type="OrthoDB" id="9779574at2"/>
<dbReference type="GO" id="GO:0005829">
    <property type="term" value="C:cytosol"/>
    <property type="evidence" value="ECO:0007669"/>
    <property type="project" value="TreeGrafter"/>
</dbReference>
<dbReference type="GO" id="GO:0046936">
    <property type="term" value="F:2'-deoxyadenosine deaminase activity"/>
    <property type="evidence" value="ECO:0007669"/>
    <property type="project" value="RHEA"/>
</dbReference>
<dbReference type="GO" id="GO:0004000">
    <property type="term" value="F:adenosine deaminase activity"/>
    <property type="evidence" value="ECO:0007669"/>
    <property type="project" value="UniProtKB-UniRule"/>
</dbReference>
<dbReference type="GO" id="GO:0008270">
    <property type="term" value="F:zinc ion binding"/>
    <property type="evidence" value="ECO:0007669"/>
    <property type="project" value="UniProtKB-UniRule"/>
</dbReference>
<dbReference type="GO" id="GO:0006154">
    <property type="term" value="P:adenosine catabolic process"/>
    <property type="evidence" value="ECO:0007669"/>
    <property type="project" value="TreeGrafter"/>
</dbReference>
<dbReference type="GO" id="GO:0043103">
    <property type="term" value="P:hypoxanthine salvage"/>
    <property type="evidence" value="ECO:0007669"/>
    <property type="project" value="TreeGrafter"/>
</dbReference>
<dbReference type="GO" id="GO:0046103">
    <property type="term" value="P:inosine biosynthetic process"/>
    <property type="evidence" value="ECO:0007669"/>
    <property type="project" value="TreeGrafter"/>
</dbReference>
<dbReference type="GO" id="GO:0009117">
    <property type="term" value="P:nucleotide metabolic process"/>
    <property type="evidence" value="ECO:0007669"/>
    <property type="project" value="UniProtKB-KW"/>
</dbReference>
<dbReference type="GO" id="GO:0009168">
    <property type="term" value="P:purine ribonucleoside monophosphate biosynthetic process"/>
    <property type="evidence" value="ECO:0007669"/>
    <property type="project" value="UniProtKB-UniRule"/>
</dbReference>
<dbReference type="FunFam" id="3.20.20.140:FF:000020">
    <property type="entry name" value="Adenosine deaminase"/>
    <property type="match status" value="1"/>
</dbReference>
<dbReference type="Gene3D" id="3.20.20.140">
    <property type="entry name" value="Metal-dependent hydrolases"/>
    <property type="match status" value="1"/>
</dbReference>
<dbReference type="HAMAP" id="MF_00540">
    <property type="entry name" value="A_deaminase"/>
    <property type="match status" value="1"/>
</dbReference>
<dbReference type="InterPro" id="IPR028893">
    <property type="entry name" value="A_deaminase"/>
</dbReference>
<dbReference type="InterPro" id="IPR001365">
    <property type="entry name" value="A_deaminase_dom"/>
</dbReference>
<dbReference type="InterPro" id="IPR006330">
    <property type="entry name" value="Ado/ade_deaminase"/>
</dbReference>
<dbReference type="InterPro" id="IPR032466">
    <property type="entry name" value="Metal_Hydrolase"/>
</dbReference>
<dbReference type="NCBIfam" id="TIGR01430">
    <property type="entry name" value="aden_deam"/>
    <property type="match status" value="1"/>
</dbReference>
<dbReference type="NCBIfam" id="NF006847">
    <property type="entry name" value="PRK09358.1-2"/>
    <property type="match status" value="1"/>
</dbReference>
<dbReference type="PANTHER" id="PTHR11409">
    <property type="entry name" value="ADENOSINE DEAMINASE"/>
    <property type="match status" value="1"/>
</dbReference>
<dbReference type="PANTHER" id="PTHR11409:SF43">
    <property type="entry name" value="ADENOSINE DEAMINASE"/>
    <property type="match status" value="1"/>
</dbReference>
<dbReference type="Pfam" id="PF00962">
    <property type="entry name" value="A_deaminase"/>
    <property type="match status" value="1"/>
</dbReference>
<dbReference type="SUPFAM" id="SSF51556">
    <property type="entry name" value="Metallo-dependent hydrolases"/>
    <property type="match status" value="1"/>
</dbReference>
<feature type="chain" id="PRO_1000081926" description="Adenosine deaminase">
    <location>
        <begin position="1"/>
        <end position="362"/>
    </location>
</feature>
<feature type="active site" description="Proton donor" evidence="1">
    <location>
        <position position="211"/>
    </location>
</feature>
<feature type="binding site" evidence="1">
    <location>
        <position position="19"/>
    </location>
    <ligand>
        <name>Zn(2+)</name>
        <dbReference type="ChEBI" id="CHEBI:29105"/>
        <note>catalytic</note>
    </ligand>
</feature>
<feature type="binding site" evidence="1">
    <location>
        <position position="21"/>
    </location>
    <ligand>
        <name>substrate</name>
    </ligand>
</feature>
<feature type="binding site" evidence="1">
    <location>
        <position position="21"/>
    </location>
    <ligand>
        <name>Zn(2+)</name>
        <dbReference type="ChEBI" id="CHEBI:29105"/>
        <note>catalytic</note>
    </ligand>
</feature>
<feature type="binding site" evidence="1">
    <location>
        <position position="23"/>
    </location>
    <ligand>
        <name>substrate</name>
    </ligand>
</feature>
<feature type="binding site" evidence="1">
    <location>
        <position position="181"/>
    </location>
    <ligand>
        <name>substrate</name>
    </ligand>
</feature>
<feature type="binding site" evidence="1">
    <location>
        <position position="208"/>
    </location>
    <ligand>
        <name>Zn(2+)</name>
        <dbReference type="ChEBI" id="CHEBI:29105"/>
        <note>catalytic</note>
    </ligand>
</feature>
<feature type="binding site" evidence="1">
    <location>
        <position position="300"/>
    </location>
    <ligand>
        <name>Zn(2+)</name>
        <dbReference type="ChEBI" id="CHEBI:29105"/>
        <note>catalytic</note>
    </ligand>
</feature>
<feature type="site" description="Important for catalytic activity" evidence="1">
    <location>
        <position position="232"/>
    </location>
</feature>
<organism>
    <name type="scientific">Mycolicibacterium gilvum (strain PYR-GCK)</name>
    <name type="common">Mycobacterium gilvum (strain PYR-GCK)</name>
    <dbReference type="NCBI Taxonomy" id="350054"/>
    <lineage>
        <taxon>Bacteria</taxon>
        <taxon>Bacillati</taxon>
        <taxon>Actinomycetota</taxon>
        <taxon>Actinomycetes</taxon>
        <taxon>Mycobacteriales</taxon>
        <taxon>Mycobacteriaceae</taxon>
        <taxon>Mycolicibacterium</taxon>
    </lineage>
</organism>
<evidence type="ECO:0000255" key="1">
    <source>
        <dbReference type="HAMAP-Rule" id="MF_00540"/>
    </source>
</evidence>
<reference key="1">
    <citation type="submission" date="2007-04" db="EMBL/GenBank/DDBJ databases">
        <title>Complete sequence of chromosome of Mycobacterium gilvum PYR-GCK.</title>
        <authorList>
            <consortium name="US DOE Joint Genome Institute"/>
            <person name="Copeland A."/>
            <person name="Lucas S."/>
            <person name="Lapidus A."/>
            <person name="Barry K."/>
            <person name="Detter J.C."/>
            <person name="Glavina del Rio T."/>
            <person name="Hammon N."/>
            <person name="Israni S."/>
            <person name="Dalin E."/>
            <person name="Tice H."/>
            <person name="Pitluck S."/>
            <person name="Chain P."/>
            <person name="Malfatti S."/>
            <person name="Shin M."/>
            <person name="Vergez L."/>
            <person name="Schmutz J."/>
            <person name="Larimer F."/>
            <person name="Land M."/>
            <person name="Hauser L."/>
            <person name="Kyrpides N."/>
            <person name="Mikhailova N."/>
            <person name="Miller C."/>
            <person name="Richardson P."/>
        </authorList>
    </citation>
    <scope>NUCLEOTIDE SEQUENCE [LARGE SCALE GENOMIC DNA]</scope>
    <source>
        <strain>PYR-GCK</strain>
    </source>
</reference>
<accession>A4TEW1</accession>
<keyword id="KW-0378">Hydrolase</keyword>
<keyword id="KW-0479">Metal-binding</keyword>
<keyword id="KW-0546">Nucleotide metabolism</keyword>
<keyword id="KW-0862">Zinc</keyword>
<proteinExistence type="inferred from homology"/>
<protein>
    <recommendedName>
        <fullName evidence="1">Adenosine deaminase</fullName>
        <ecNumber evidence="1">3.5.4.4</ecNumber>
    </recommendedName>
    <alternativeName>
        <fullName evidence="1">Adenosine aminohydrolase</fullName>
    </alternativeName>
</protein>
<sequence>MTTPLTLENIRRAPKALLHDHLDGGLRPSTVLELAEQYGYDDLPAHDADELAEFFRTAAHSGSLVRYLEPFAHTVGVMQNHDALHRVARECVEDLADDNVVYAEIRFAPELHIDGGLSLDAVVEAVLAGFADGEKAAAAAGRTITVRCLVTAMRHAARSREIAALAIRFRDQGVVGFDIAGAEAGYPPSRHLDAFEYMRSNNARFTIHAGEAFGLPSIHEAIAFCGADRLGHGVRIVDDIDMDAEGGPKLGRLAALLRDKRIPFEMCPSSNVQTGAVASIAEHPFDRLARLRFRVTVNTDNRLMSDTTMSLEMLRLVEAFGYGWSDLERFTINAMKSAFISFPERLAIIDEVIKPRYAVLVG</sequence>
<comment type="function">
    <text evidence="1">Catalyzes the hydrolytic deamination of adenosine and 2-deoxyadenosine.</text>
</comment>
<comment type="catalytic activity">
    <reaction evidence="1">
        <text>adenosine + H2O + H(+) = inosine + NH4(+)</text>
        <dbReference type="Rhea" id="RHEA:24408"/>
        <dbReference type="ChEBI" id="CHEBI:15377"/>
        <dbReference type="ChEBI" id="CHEBI:15378"/>
        <dbReference type="ChEBI" id="CHEBI:16335"/>
        <dbReference type="ChEBI" id="CHEBI:17596"/>
        <dbReference type="ChEBI" id="CHEBI:28938"/>
        <dbReference type="EC" id="3.5.4.4"/>
    </reaction>
    <physiologicalReaction direction="left-to-right" evidence="1">
        <dbReference type="Rhea" id="RHEA:24409"/>
    </physiologicalReaction>
</comment>
<comment type="catalytic activity">
    <reaction evidence="1">
        <text>2'-deoxyadenosine + H2O + H(+) = 2'-deoxyinosine + NH4(+)</text>
        <dbReference type="Rhea" id="RHEA:28190"/>
        <dbReference type="ChEBI" id="CHEBI:15377"/>
        <dbReference type="ChEBI" id="CHEBI:15378"/>
        <dbReference type="ChEBI" id="CHEBI:17256"/>
        <dbReference type="ChEBI" id="CHEBI:28938"/>
        <dbReference type="ChEBI" id="CHEBI:28997"/>
        <dbReference type="EC" id="3.5.4.4"/>
    </reaction>
    <physiologicalReaction direction="left-to-right" evidence="1">
        <dbReference type="Rhea" id="RHEA:28191"/>
    </physiologicalReaction>
</comment>
<comment type="cofactor">
    <cofactor evidence="1">
        <name>Zn(2+)</name>
        <dbReference type="ChEBI" id="CHEBI:29105"/>
    </cofactor>
    <text evidence="1">Binds 1 zinc ion per subunit.</text>
</comment>
<comment type="similarity">
    <text evidence="1">Belongs to the metallo-dependent hydrolases superfamily. Adenosine and AMP deaminases family. Adenosine deaminase subfamily.</text>
</comment>